<comment type="function">
    <text evidence="1">Bidirectionally degrades single-stranded DNA into large acid-insoluble oligonucleotides, which are then degraded further into small acid-soluble oligonucleotides.</text>
</comment>
<comment type="catalytic activity">
    <reaction evidence="1">
        <text>Exonucleolytic cleavage in either 5'- to 3'- or 3'- to 5'-direction to yield nucleoside 5'-phosphates.</text>
        <dbReference type="EC" id="3.1.11.6"/>
    </reaction>
</comment>
<comment type="subunit">
    <text evidence="1">Heterooligomer composed of large and small subunits.</text>
</comment>
<comment type="subcellular location">
    <subcellularLocation>
        <location evidence="1">Cytoplasm</location>
    </subcellularLocation>
</comment>
<comment type="similarity">
    <text evidence="1">Belongs to the XseA family.</text>
</comment>
<feature type="chain" id="PRO_1000079985" description="Exodeoxyribonuclease 7 large subunit">
    <location>
        <begin position="1"/>
        <end position="446"/>
    </location>
</feature>
<organism>
    <name type="scientific">Geotalea uraniireducens (strain Rf4)</name>
    <name type="common">Geobacter uraniireducens</name>
    <dbReference type="NCBI Taxonomy" id="351605"/>
    <lineage>
        <taxon>Bacteria</taxon>
        <taxon>Pseudomonadati</taxon>
        <taxon>Thermodesulfobacteriota</taxon>
        <taxon>Desulfuromonadia</taxon>
        <taxon>Geobacterales</taxon>
        <taxon>Geobacteraceae</taxon>
        <taxon>Geotalea</taxon>
    </lineage>
</organism>
<proteinExistence type="inferred from homology"/>
<protein>
    <recommendedName>
        <fullName evidence="1">Exodeoxyribonuclease 7 large subunit</fullName>
        <ecNumber evidence="1">3.1.11.6</ecNumber>
    </recommendedName>
    <alternativeName>
        <fullName evidence="1">Exodeoxyribonuclease VII large subunit</fullName>
        <shortName evidence="1">Exonuclease VII large subunit</shortName>
    </alternativeName>
</protein>
<gene>
    <name evidence="1" type="primary">xseA</name>
    <name type="ordered locus">Gura_1890</name>
</gene>
<name>EX7L_GEOUR</name>
<keyword id="KW-0963">Cytoplasm</keyword>
<keyword id="KW-0269">Exonuclease</keyword>
<keyword id="KW-0378">Hydrolase</keyword>
<keyword id="KW-0540">Nuclease</keyword>
<keyword id="KW-1185">Reference proteome</keyword>
<accession>A5GF75</accession>
<dbReference type="EC" id="3.1.11.6" evidence="1"/>
<dbReference type="EMBL" id="CP000698">
    <property type="protein sequence ID" value="ABQ26080.1"/>
    <property type="molecule type" value="Genomic_DNA"/>
</dbReference>
<dbReference type="RefSeq" id="WP_011938783.1">
    <property type="nucleotide sequence ID" value="NC_009483.1"/>
</dbReference>
<dbReference type="SMR" id="A5GF75"/>
<dbReference type="STRING" id="351605.Gura_1890"/>
<dbReference type="KEGG" id="gur:Gura_1890"/>
<dbReference type="HOGENOM" id="CLU_023625_3_1_7"/>
<dbReference type="OrthoDB" id="9802795at2"/>
<dbReference type="Proteomes" id="UP000006695">
    <property type="component" value="Chromosome"/>
</dbReference>
<dbReference type="GO" id="GO:0005737">
    <property type="term" value="C:cytoplasm"/>
    <property type="evidence" value="ECO:0007669"/>
    <property type="project" value="UniProtKB-SubCell"/>
</dbReference>
<dbReference type="GO" id="GO:0009318">
    <property type="term" value="C:exodeoxyribonuclease VII complex"/>
    <property type="evidence" value="ECO:0007669"/>
    <property type="project" value="InterPro"/>
</dbReference>
<dbReference type="GO" id="GO:0008855">
    <property type="term" value="F:exodeoxyribonuclease VII activity"/>
    <property type="evidence" value="ECO:0007669"/>
    <property type="project" value="UniProtKB-UniRule"/>
</dbReference>
<dbReference type="GO" id="GO:0003676">
    <property type="term" value="F:nucleic acid binding"/>
    <property type="evidence" value="ECO:0007669"/>
    <property type="project" value="InterPro"/>
</dbReference>
<dbReference type="GO" id="GO:0006308">
    <property type="term" value="P:DNA catabolic process"/>
    <property type="evidence" value="ECO:0007669"/>
    <property type="project" value="UniProtKB-UniRule"/>
</dbReference>
<dbReference type="CDD" id="cd04489">
    <property type="entry name" value="ExoVII_LU_OBF"/>
    <property type="match status" value="1"/>
</dbReference>
<dbReference type="HAMAP" id="MF_00378">
    <property type="entry name" value="Exonuc_7_L"/>
    <property type="match status" value="1"/>
</dbReference>
<dbReference type="InterPro" id="IPR003753">
    <property type="entry name" value="Exonuc_VII_L"/>
</dbReference>
<dbReference type="InterPro" id="IPR020579">
    <property type="entry name" value="Exonuc_VII_lsu_C"/>
</dbReference>
<dbReference type="InterPro" id="IPR025824">
    <property type="entry name" value="OB-fold_nuc-bd_dom"/>
</dbReference>
<dbReference type="NCBIfam" id="TIGR00237">
    <property type="entry name" value="xseA"/>
    <property type="match status" value="1"/>
</dbReference>
<dbReference type="PANTHER" id="PTHR30008">
    <property type="entry name" value="EXODEOXYRIBONUCLEASE 7 LARGE SUBUNIT"/>
    <property type="match status" value="1"/>
</dbReference>
<dbReference type="PANTHER" id="PTHR30008:SF0">
    <property type="entry name" value="EXODEOXYRIBONUCLEASE 7 LARGE SUBUNIT"/>
    <property type="match status" value="1"/>
</dbReference>
<dbReference type="Pfam" id="PF02601">
    <property type="entry name" value="Exonuc_VII_L"/>
    <property type="match status" value="1"/>
</dbReference>
<dbReference type="Pfam" id="PF13742">
    <property type="entry name" value="tRNA_anti_2"/>
    <property type="match status" value="1"/>
</dbReference>
<evidence type="ECO:0000255" key="1">
    <source>
        <dbReference type="HAMAP-Rule" id="MF_00378"/>
    </source>
</evidence>
<reference key="1">
    <citation type="submission" date="2007-05" db="EMBL/GenBank/DDBJ databases">
        <title>Complete sequence of Geobacter uraniireducens Rf4.</title>
        <authorList>
            <consortium name="US DOE Joint Genome Institute"/>
            <person name="Copeland A."/>
            <person name="Lucas S."/>
            <person name="Lapidus A."/>
            <person name="Barry K."/>
            <person name="Detter J.C."/>
            <person name="Glavina del Rio T."/>
            <person name="Hammon N."/>
            <person name="Israni S."/>
            <person name="Dalin E."/>
            <person name="Tice H."/>
            <person name="Pitluck S."/>
            <person name="Chertkov O."/>
            <person name="Brettin T."/>
            <person name="Bruce D."/>
            <person name="Han C."/>
            <person name="Schmutz J."/>
            <person name="Larimer F."/>
            <person name="Land M."/>
            <person name="Hauser L."/>
            <person name="Kyrpides N."/>
            <person name="Mikhailova N."/>
            <person name="Shelobolina E."/>
            <person name="Aklujkar M."/>
            <person name="Lovley D."/>
            <person name="Richardson P."/>
        </authorList>
    </citation>
    <scope>NUCLEOTIDE SEQUENCE [LARGE SCALE GENOMIC DNA]</scope>
    <source>
        <strain>ATCC BAA-1134 / JCM 13001 / Rf4</strain>
    </source>
</reference>
<sequence>MELFAEKRILTVSQLNGLIRGVLEENFEQVWVEGEISNLAMPHSGHLYFTLKDAGAQVRCVMFRASSRALKFKPKDGMGLIVRGRVSVFEPRGEYQLIVEYLEPQGIGALQLAFIQLKERLAKEGLFAETHKKPIPKLPQRIGVVTSATGAAIHDILNVLNRRFANVQVLIRPVKVQGEGAAGEIAAAIRDFNRYREIDVMIVGRGGGSLEDLWAFNEEVVARAIYESKIPVISAVGHEIDFTIADFVADLRAPTPSAAAELVVKSKAELASDLDALSHRLVLAMRHCLEDCWGDVNGLTRALKDPSLLLGHLAQRVDDLDERIKHAVQVMLLRRKEKAAFLQNRLRLQNPALQVEQGKELLLGYCARMENTMERLLERARQAAAVSAGKLHALSPLATLARGYSIVRKLPDMSVISDSSQVEPGDLLDLTFQQGGAHCRVETKHD</sequence>